<protein>
    <recommendedName>
        <fullName>Uncharacterized HTH-type transcriptional regulator RC0668</fullName>
    </recommendedName>
</protein>
<sequence>MGRKNDIIQKIDSFIGKKIYSLRLAKGLSRQQLAEVIDVTHQQLQKYEKAINRISVGRLVLIAEALDRNIDYFFEGLEEANKPQPVHTQHQRMCIEVSRNFMKINSTEEQQAVNNLVKCLAGKKN</sequence>
<reference key="1">
    <citation type="journal article" date="2001" name="Science">
        <title>Mechanisms of evolution in Rickettsia conorii and R. prowazekii.</title>
        <authorList>
            <person name="Ogata H."/>
            <person name="Audic S."/>
            <person name="Renesto-Audiffren P."/>
            <person name="Fournier P.-E."/>
            <person name="Barbe V."/>
            <person name="Samson D."/>
            <person name="Roux V."/>
            <person name="Cossart P."/>
            <person name="Weissenbach J."/>
            <person name="Claverie J.-M."/>
            <person name="Raoult D."/>
        </authorList>
    </citation>
    <scope>NUCLEOTIDE SEQUENCE [LARGE SCALE GENOMIC DNA]</scope>
    <source>
        <strain>ATCC VR-613 / Malish 7</strain>
    </source>
</reference>
<proteinExistence type="predicted"/>
<organism>
    <name type="scientific">Rickettsia conorii (strain ATCC VR-613 / Malish 7)</name>
    <dbReference type="NCBI Taxonomy" id="272944"/>
    <lineage>
        <taxon>Bacteria</taxon>
        <taxon>Pseudomonadati</taxon>
        <taxon>Pseudomonadota</taxon>
        <taxon>Alphaproteobacteria</taxon>
        <taxon>Rickettsiales</taxon>
        <taxon>Rickettsiaceae</taxon>
        <taxon>Rickettsieae</taxon>
        <taxon>Rickettsia</taxon>
        <taxon>spotted fever group</taxon>
    </lineage>
</organism>
<keyword id="KW-0238">DNA-binding</keyword>
<keyword id="KW-0804">Transcription</keyword>
<keyword id="KW-0805">Transcription regulation</keyword>
<accession>Q92HV3</accession>
<evidence type="ECO:0000255" key="1">
    <source>
        <dbReference type="PROSITE-ProRule" id="PRU00257"/>
    </source>
</evidence>
<dbReference type="EMBL" id="AE006914">
    <property type="protein sequence ID" value="AAL03206.1"/>
    <property type="molecule type" value="Genomic_DNA"/>
</dbReference>
<dbReference type="PIR" id="D97783">
    <property type="entry name" value="D97783"/>
</dbReference>
<dbReference type="RefSeq" id="WP_010977292.1">
    <property type="nucleotide sequence ID" value="NC_003103.1"/>
</dbReference>
<dbReference type="SMR" id="Q92HV3"/>
<dbReference type="GeneID" id="927847"/>
<dbReference type="KEGG" id="rco:RC0668"/>
<dbReference type="HOGENOM" id="CLU_066192_26_0_5"/>
<dbReference type="Proteomes" id="UP000000816">
    <property type="component" value="Chromosome"/>
</dbReference>
<dbReference type="GO" id="GO:0003677">
    <property type="term" value="F:DNA binding"/>
    <property type="evidence" value="ECO:0007669"/>
    <property type="project" value="UniProtKB-KW"/>
</dbReference>
<dbReference type="CDD" id="cd00093">
    <property type="entry name" value="HTH_XRE"/>
    <property type="match status" value="1"/>
</dbReference>
<dbReference type="Gene3D" id="1.10.260.40">
    <property type="entry name" value="lambda repressor-like DNA-binding domains"/>
    <property type="match status" value="1"/>
</dbReference>
<dbReference type="InterPro" id="IPR001387">
    <property type="entry name" value="Cro/C1-type_HTH"/>
</dbReference>
<dbReference type="InterPro" id="IPR010982">
    <property type="entry name" value="Lambda_DNA-bd_dom_sf"/>
</dbReference>
<dbReference type="PANTHER" id="PTHR46558">
    <property type="entry name" value="TRACRIPTIONAL REGULATORY PROTEIN-RELATED-RELATED"/>
    <property type="match status" value="1"/>
</dbReference>
<dbReference type="PANTHER" id="PTHR46558:SF3">
    <property type="entry name" value="TRANSCRIPTIONAL REGULATOR"/>
    <property type="match status" value="1"/>
</dbReference>
<dbReference type="Pfam" id="PF01381">
    <property type="entry name" value="HTH_3"/>
    <property type="match status" value="1"/>
</dbReference>
<dbReference type="SMART" id="SM00530">
    <property type="entry name" value="HTH_XRE"/>
    <property type="match status" value="1"/>
</dbReference>
<dbReference type="SUPFAM" id="SSF47413">
    <property type="entry name" value="lambda repressor-like DNA-binding domains"/>
    <property type="match status" value="1"/>
</dbReference>
<dbReference type="PROSITE" id="PS50943">
    <property type="entry name" value="HTH_CROC1"/>
    <property type="match status" value="1"/>
</dbReference>
<feature type="chain" id="PRO_0000149780" description="Uncharacterized HTH-type transcriptional regulator RC0668">
    <location>
        <begin position="1"/>
        <end position="125"/>
    </location>
</feature>
<feature type="domain" description="HTH cro/C1-type" evidence="1">
    <location>
        <begin position="19"/>
        <end position="73"/>
    </location>
</feature>
<feature type="DNA-binding region" description="H-T-H motif" evidence="1">
    <location>
        <begin position="30"/>
        <end position="49"/>
    </location>
</feature>
<gene>
    <name type="ordered locus">RC0668</name>
</gene>
<name>Y668_RICCN</name>